<proteinExistence type="inferred from homology"/>
<comment type="function">
    <text evidence="1">Part of the ABC transporter complex PstSACB involved in phosphate import. Responsible for energy coupling to the transport system.</text>
</comment>
<comment type="catalytic activity">
    <reaction evidence="1">
        <text>phosphate(out) + ATP + H2O = ADP + 2 phosphate(in) + H(+)</text>
        <dbReference type="Rhea" id="RHEA:24440"/>
        <dbReference type="ChEBI" id="CHEBI:15377"/>
        <dbReference type="ChEBI" id="CHEBI:15378"/>
        <dbReference type="ChEBI" id="CHEBI:30616"/>
        <dbReference type="ChEBI" id="CHEBI:43474"/>
        <dbReference type="ChEBI" id="CHEBI:456216"/>
        <dbReference type="EC" id="7.3.2.1"/>
    </reaction>
</comment>
<comment type="subunit">
    <text evidence="1">The complex is composed of two ATP-binding proteins (PstB), two transmembrane proteins (PstC and PstA) and a solute-binding protein (PstS).</text>
</comment>
<comment type="subcellular location">
    <subcellularLocation>
        <location evidence="1">Cell membrane</location>
        <topology evidence="1">Peripheral membrane protein</topology>
    </subcellularLocation>
</comment>
<comment type="similarity">
    <text evidence="1">Belongs to the ABC transporter superfamily. Phosphate importer (TC 3.A.1.7) family.</text>
</comment>
<gene>
    <name evidence="1" type="primary">pstB</name>
    <name type="ordered locus">MG410</name>
</gene>
<organism>
    <name type="scientific">Mycoplasma genitalium (strain ATCC 33530 / DSM 19775 / NCTC 10195 / G37)</name>
    <name type="common">Mycoplasmoides genitalium</name>
    <dbReference type="NCBI Taxonomy" id="243273"/>
    <lineage>
        <taxon>Bacteria</taxon>
        <taxon>Bacillati</taxon>
        <taxon>Mycoplasmatota</taxon>
        <taxon>Mycoplasmoidales</taxon>
        <taxon>Mycoplasmoidaceae</taxon>
        <taxon>Mycoplasmoides</taxon>
    </lineage>
</organism>
<evidence type="ECO:0000255" key="1">
    <source>
        <dbReference type="HAMAP-Rule" id="MF_01702"/>
    </source>
</evidence>
<evidence type="ECO:0000305" key="2"/>
<accession>P47650</accession>
<accession>Q49513</accession>
<name>PSTB_MYCGE</name>
<dbReference type="EC" id="7.3.2.1" evidence="1"/>
<dbReference type="EMBL" id="L43967">
    <property type="protein sequence ID" value="AAC71638.1"/>
    <property type="molecule type" value="Genomic_DNA"/>
</dbReference>
<dbReference type="EMBL" id="U01707">
    <property type="protein sequence ID" value="AAB01019.1"/>
    <property type="molecule type" value="Genomic_DNA"/>
</dbReference>
<dbReference type="PIR" id="D64245">
    <property type="entry name" value="D64245"/>
</dbReference>
<dbReference type="RefSeq" id="WP_009885613.1">
    <property type="nucleotide sequence ID" value="NC_000908.2"/>
</dbReference>
<dbReference type="SMR" id="P47650"/>
<dbReference type="FunCoup" id="P47650">
    <property type="interactions" value="96"/>
</dbReference>
<dbReference type="STRING" id="243273.MG_410"/>
<dbReference type="GeneID" id="88282595"/>
<dbReference type="KEGG" id="mge:MG_410"/>
<dbReference type="eggNOG" id="COG1117">
    <property type="taxonomic scope" value="Bacteria"/>
</dbReference>
<dbReference type="HOGENOM" id="CLU_000604_1_22_14"/>
<dbReference type="InParanoid" id="P47650"/>
<dbReference type="OrthoDB" id="9802185at2"/>
<dbReference type="BioCyc" id="MGEN243273:G1GJ2-507-MONOMER"/>
<dbReference type="Proteomes" id="UP000000807">
    <property type="component" value="Chromosome"/>
</dbReference>
<dbReference type="GO" id="GO:0005886">
    <property type="term" value="C:plasma membrane"/>
    <property type="evidence" value="ECO:0007669"/>
    <property type="project" value="UniProtKB-SubCell"/>
</dbReference>
<dbReference type="GO" id="GO:0005524">
    <property type="term" value="F:ATP binding"/>
    <property type="evidence" value="ECO:0007669"/>
    <property type="project" value="UniProtKB-KW"/>
</dbReference>
<dbReference type="GO" id="GO:0016887">
    <property type="term" value="F:ATP hydrolysis activity"/>
    <property type="evidence" value="ECO:0007669"/>
    <property type="project" value="InterPro"/>
</dbReference>
<dbReference type="GO" id="GO:0015415">
    <property type="term" value="F:ATPase-coupled phosphate ion transmembrane transporter activity"/>
    <property type="evidence" value="ECO:0007669"/>
    <property type="project" value="UniProtKB-EC"/>
</dbReference>
<dbReference type="GO" id="GO:0035435">
    <property type="term" value="P:phosphate ion transmembrane transport"/>
    <property type="evidence" value="ECO:0007669"/>
    <property type="project" value="InterPro"/>
</dbReference>
<dbReference type="CDD" id="cd03260">
    <property type="entry name" value="ABC_PstB_phosphate_transporter"/>
    <property type="match status" value="1"/>
</dbReference>
<dbReference type="Gene3D" id="3.40.50.300">
    <property type="entry name" value="P-loop containing nucleotide triphosphate hydrolases"/>
    <property type="match status" value="1"/>
</dbReference>
<dbReference type="InterPro" id="IPR003593">
    <property type="entry name" value="AAA+_ATPase"/>
</dbReference>
<dbReference type="InterPro" id="IPR003439">
    <property type="entry name" value="ABC_transporter-like_ATP-bd"/>
</dbReference>
<dbReference type="InterPro" id="IPR017871">
    <property type="entry name" value="ABC_transporter-like_CS"/>
</dbReference>
<dbReference type="InterPro" id="IPR027417">
    <property type="entry name" value="P-loop_NTPase"/>
</dbReference>
<dbReference type="InterPro" id="IPR005670">
    <property type="entry name" value="PstB-like"/>
</dbReference>
<dbReference type="NCBIfam" id="TIGR00972">
    <property type="entry name" value="3a0107s01c2"/>
    <property type="match status" value="1"/>
</dbReference>
<dbReference type="PANTHER" id="PTHR43423">
    <property type="entry name" value="ABC TRANSPORTER I FAMILY MEMBER 17"/>
    <property type="match status" value="1"/>
</dbReference>
<dbReference type="PANTHER" id="PTHR43423:SF1">
    <property type="entry name" value="ABC TRANSPORTER I FAMILY MEMBER 17"/>
    <property type="match status" value="1"/>
</dbReference>
<dbReference type="Pfam" id="PF00005">
    <property type="entry name" value="ABC_tran"/>
    <property type="match status" value="1"/>
</dbReference>
<dbReference type="SMART" id="SM00382">
    <property type="entry name" value="AAA"/>
    <property type="match status" value="1"/>
</dbReference>
<dbReference type="SUPFAM" id="SSF52540">
    <property type="entry name" value="P-loop containing nucleoside triphosphate hydrolases"/>
    <property type="match status" value="1"/>
</dbReference>
<dbReference type="PROSITE" id="PS00211">
    <property type="entry name" value="ABC_TRANSPORTER_1"/>
    <property type="match status" value="1"/>
</dbReference>
<dbReference type="PROSITE" id="PS50893">
    <property type="entry name" value="ABC_TRANSPORTER_2"/>
    <property type="match status" value="1"/>
</dbReference>
<dbReference type="PROSITE" id="PS51238">
    <property type="entry name" value="PSTB"/>
    <property type="match status" value="1"/>
</dbReference>
<reference key="1">
    <citation type="journal article" date="1995" name="Science">
        <title>The minimal gene complement of Mycoplasma genitalium.</title>
        <authorList>
            <person name="Fraser C.M."/>
            <person name="Gocayne J.D."/>
            <person name="White O."/>
            <person name="Adams M.D."/>
            <person name="Clayton R.A."/>
            <person name="Fleischmann R.D."/>
            <person name="Bult C.J."/>
            <person name="Kerlavage A.R."/>
            <person name="Sutton G.G."/>
            <person name="Kelley J.M."/>
            <person name="Fritchman J.L."/>
            <person name="Weidman J.F."/>
            <person name="Small K.V."/>
            <person name="Sandusky M."/>
            <person name="Fuhrmann J.L."/>
            <person name="Nguyen D.T."/>
            <person name="Utterback T.R."/>
            <person name="Saudek D.M."/>
            <person name="Phillips C.A."/>
            <person name="Merrick J.M."/>
            <person name="Tomb J.-F."/>
            <person name="Dougherty B.A."/>
            <person name="Bott K.F."/>
            <person name="Hu P.-C."/>
            <person name="Lucier T.S."/>
            <person name="Peterson S.N."/>
            <person name="Smith H.O."/>
            <person name="Hutchison C.A. III"/>
            <person name="Venter J.C."/>
        </authorList>
    </citation>
    <scope>NUCLEOTIDE SEQUENCE [LARGE SCALE GENOMIC DNA]</scope>
    <source>
        <strain>ATCC 33530 / DSM 19775 / NCTC 10195 / G37</strain>
    </source>
</reference>
<reference key="2">
    <citation type="journal article" date="1993" name="J. Bacteriol.">
        <title>A survey of the Mycoplasma genitalium genome by using random sequencing.</title>
        <authorList>
            <person name="Peterson S.N."/>
            <person name="Hu P.-C."/>
            <person name="Bott K.F."/>
            <person name="Hutchison C.A. III"/>
        </authorList>
    </citation>
    <scope>NUCLEOTIDE SEQUENCE [GENOMIC DNA] OF 101-313</scope>
    <source>
        <strain>ATCC 33530 / DSM 19775 / NCTC 10195 / G37</strain>
    </source>
</reference>
<protein>
    <recommendedName>
        <fullName evidence="1">Phosphate import ATP-binding protein PstB</fullName>
        <ecNumber evidence="1">7.3.2.1</ecNumber>
    </recommendedName>
    <alternativeName>
        <fullName evidence="1">ABC phosphate transporter</fullName>
    </alternativeName>
    <alternativeName>
        <fullName evidence="1">Phosphate-transporting ATPase</fullName>
    </alternativeName>
</protein>
<sequence length="329" mass="37940">MEKNIKALWKNFQLKLEKIKHYRKLYEQQIKEYKKKITGLNNETDANEISRIKNEIEILNRLIKIKNTKDNVIKKDFDEKNVFEIRNFNFWYNKNKQVLFDINLDIKRNKITALIGKSGCGKSTFIRCLNKLNDLNENTRWTGDIYFLGKNINSGIINDLTLRTSVGMVFQKLTPFNFSIFENIAYGIRAHGIHNKNAINEIVRQALISAALWDEVKDNLHRNANTLSGGQQQRLCIARAIALQPDVLLMDEPTSALDSIATNSIELLIQQLKEKFTIVIVTHSMAQTIRITDETIFFADGRVIEQGTTKQIFTKPKQKATNSYISGKN</sequence>
<feature type="chain" id="PRO_0000092840" description="Phosphate import ATP-binding protein PstB">
    <location>
        <begin position="1"/>
        <end position="329"/>
    </location>
</feature>
<feature type="domain" description="ABC transporter" evidence="1">
    <location>
        <begin position="83"/>
        <end position="325"/>
    </location>
</feature>
<feature type="binding site" evidence="1">
    <location>
        <begin position="116"/>
        <end position="123"/>
    </location>
    <ligand>
        <name>ATP</name>
        <dbReference type="ChEBI" id="CHEBI:30616"/>
    </ligand>
</feature>
<feature type="sequence conflict" description="In Ref. 2; AAB01019." evidence="2" ref="2">
    <original>KQIFTKPKQKATNSYISGKN</original>
    <variation>NRYL</variation>
    <location>
        <begin position="310"/>
        <end position="329"/>
    </location>
</feature>
<keyword id="KW-0067">ATP-binding</keyword>
<keyword id="KW-1003">Cell membrane</keyword>
<keyword id="KW-0472">Membrane</keyword>
<keyword id="KW-0547">Nucleotide-binding</keyword>
<keyword id="KW-0592">Phosphate transport</keyword>
<keyword id="KW-1185">Reference proteome</keyword>
<keyword id="KW-1278">Translocase</keyword>
<keyword id="KW-0813">Transport</keyword>